<gene>
    <name evidence="1" type="primary">cmk</name>
    <name type="ordered locus">Smed_3457</name>
</gene>
<protein>
    <recommendedName>
        <fullName evidence="1">Cytidylate kinase</fullName>
        <shortName evidence="1">CK</shortName>
        <ecNumber evidence="1">2.7.4.25</ecNumber>
    </recommendedName>
    <alternativeName>
        <fullName evidence="1">Cytidine monophosphate kinase</fullName>
        <shortName evidence="1">CMP kinase</shortName>
    </alternativeName>
</protein>
<reference key="1">
    <citation type="submission" date="2007-06" db="EMBL/GenBank/DDBJ databases">
        <title>Complete sequence of Sinorhizobium medicae WSM419 chromosome.</title>
        <authorList>
            <consortium name="US DOE Joint Genome Institute"/>
            <person name="Copeland A."/>
            <person name="Lucas S."/>
            <person name="Lapidus A."/>
            <person name="Barry K."/>
            <person name="Glavina del Rio T."/>
            <person name="Dalin E."/>
            <person name="Tice H."/>
            <person name="Pitluck S."/>
            <person name="Chain P."/>
            <person name="Malfatti S."/>
            <person name="Shin M."/>
            <person name="Vergez L."/>
            <person name="Schmutz J."/>
            <person name="Larimer F."/>
            <person name="Land M."/>
            <person name="Hauser L."/>
            <person name="Kyrpides N."/>
            <person name="Mikhailova N."/>
            <person name="Reeve W.G."/>
            <person name="Richardson P."/>
        </authorList>
    </citation>
    <scope>NUCLEOTIDE SEQUENCE [LARGE SCALE GENOMIC DNA]</scope>
    <source>
        <strain>WSM419</strain>
    </source>
</reference>
<dbReference type="EC" id="2.7.4.25" evidence="1"/>
<dbReference type="EMBL" id="CP000738">
    <property type="protein sequence ID" value="ABR62275.1"/>
    <property type="molecule type" value="Genomic_DNA"/>
</dbReference>
<dbReference type="RefSeq" id="WP_012067655.1">
    <property type="nucleotide sequence ID" value="NC_009636.1"/>
</dbReference>
<dbReference type="RefSeq" id="YP_001329110.1">
    <property type="nucleotide sequence ID" value="NC_009636.1"/>
</dbReference>
<dbReference type="SMR" id="A6UF45"/>
<dbReference type="STRING" id="366394.Smed_3457"/>
<dbReference type="GeneID" id="61611009"/>
<dbReference type="KEGG" id="smd:Smed_3457"/>
<dbReference type="PATRIC" id="fig|366394.8.peg.6707"/>
<dbReference type="eggNOG" id="COG0283">
    <property type="taxonomic scope" value="Bacteria"/>
</dbReference>
<dbReference type="HOGENOM" id="CLU_079959_0_1_5"/>
<dbReference type="OrthoDB" id="9807434at2"/>
<dbReference type="Proteomes" id="UP000001108">
    <property type="component" value="Chromosome"/>
</dbReference>
<dbReference type="GO" id="GO:0005737">
    <property type="term" value="C:cytoplasm"/>
    <property type="evidence" value="ECO:0007669"/>
    <property type="project" value="UniProtKB-SubCell"/>
</dbReference>
<dbReference type="GO" id="GO:0005524">
    <property type="term" value="F:ATP binding"/>
    <property type="evidence" value="ECO:0007669"/>
    <property type="project" value="UniProtKB-UniRule"/>
</dbReference>
<dbReference type="GO" id="GO:0036430">
    <property type="term" value="F:CMP kinase activity"/>
    <property type="evidence" value="ECO:0007669"/>
    <property type="project" value="RHEA"/>
</dbReference>
<dbReference type="GO" id="GO:0036431">
    <property type="term" value="F:dCMP kinase activity"/>
    <property type="evidence" value="ECO:0007669"/>
    <property type="project" value="RHEA"/>
</dbReference>
<dbReference type="GO" id="GO:0006220">
    <property type="term" value="P:pyrimidine nucleotide metabolic process"/>
    <property type="evidence" value="ECO:0007669"/>
    <property type="project" value="UniProtKB-UniRule"/>
</dbReference>
<dbReference type="CDD" id="cd02020">
    <property type="entry name" value="CMPK"/>
    <property type="match status" value="1"/>
</dbReference>
<dbReference type="Gene3D" id="3.40.50.300">
    <property type="entry name" value="P-loop containing nucleotide triphosphate hydrolases"/>
    <property type="match status" value="1"/>
</dbReference>
<dbReference type="HAMAP" id="MF_00238">
    <property type="entry name" value="Cytidyl_kinase_type1"/>
    <property type="match status" value="1"/>
</dbReference>
<dbReference type="InterPro" id="IPR003136">
    <property type="entry name" value="Cytidylate_kin"/>
</dbReference>
<dbReference type="InterPro" id="IPR011994">
    <property type="entry name" value="Cytidylate_kinase_dom"/>
</dbReference>
<dbReference type="InterPro" id="IPR027417">
    <property type="entry name" value="P-loop_NTPase"/>
</dbReference>
<dbReference type="NCBIfam" id="TIGR00017">
    <property type="entry name" value="cmk"/>
    <property type="match status" value="1"/>
</dbReference>
<dbReference type="Pfam" id="PF02224">
    <property type="entry name" value="Cytidylate_kin"/>
    <property type="match status" value="1"/>
</dbReference>
<dbReference type="SUPFAM" id="SSF52540">
    <property type="entry name" value="P-loop containing nucleoside triphosphate hydrolases"/>
    <property type="match status" value="1"/>
</dbReference>
<keyword id="KW-0067">ATP-binding</keyword>
<keyword id="KW-0963">Cytoplasm</keyword>
<keyword id="KW-0418">Kinase</keyword>
<keyword id="KW-0547">Nucleotide-binding</keyword>
<keyword id="KW-0808">Transferase</keyword>
<comment type="catalytic activity">
    <reaction evidence="1">
        <text>CMP + ATP = CDP + ADP</text>
        <dbReference type="Rhea" id="RHEA:11600"/>
        <dbReference type="ChEBI" id="CHEBI:30616"/>
        <dbReference type="ChEBI" id="CHEBI:58069"/>
        <dbReference type="ChEBI" id="CHEBI:60377"/>
        <dbReference type="ChEBI" id="CHEBI:456216"/>
        <dbReference type="EC" id="2.7.4.25"/>
    </reaction>
</comment>
<comment type="catalytic activity">
    <reaction evidence="1">
        <text>dCMP + ATP = dCDP + ADP</text>
        <dbReference type="Rhea" id="RHEA:25094"/>
        <dbReference type="ChEBI" id="CHEBI:30616"/>
        <dbReference type="ChEBI" id="CHEBI:57566"/>
        <dbReference type="ChEBI" id="CHEBI:58593"/>
        <dbReference type="ChEBI" id="CHEBI:456216"/>
        <dbReference type="EC" id="2.7.4.25"/>
    </reaction>
</comment>
<comment type="subcellular location">
    <subcellularLocation>
        <location evidence="1">Cytoplasm</location>
    </subcellularLocation>
</comment>
<comment type="similarity">
    <text evidence="1">Belongs to the cytidylate kinase family. Type 1 subfamily.</text>
</comment>
<proteinExistence type="inferred from homology"/>
<accession>A6UF45</accession>
<organism>
    <name type="scientific">Sinorhizobium medicae (strain WSM419)</name>
    <name type="common">Ensifer medicae</name>
    <dbReference type="NCBI Taxonomy" id="366394"/>
    <lineage>
        <taxon>Bacteria</taxon>
        <taxon>Pseudomonadati</taxon>
        <taxon>Pseudomonadota</taxon>
        <taxon>Alphaproteobacteria</taxon>
        <taxon>Hyphomicrobiales</taxon>
        <taxon>Rhizobiaceae</taxon>
        <taxon>Sinorhizobium/Ensifer group</taxon>
        <taxon>Sinorhizobium</taxon>
    </lineage>
</organism>
<feature type="chain" id="PRO_1000048286" description="Cytidylate kinase">
    <location>
        <begin position="1"/>
        <end position="212"/>
    </location>
</feature>
<feature type="binding site" evidence="1">
    <location>
        <begin position="9"/>
        <end position="17"/>
    </location>
    <ligand>
        <name>ATP</name>
        <dbReference type="ChEBI" id="CHEBI:30616"/>
    </ligand>
</feature>
<name>KCY_SINMW</name>
<sequence>MSFVVAIDGPAAAGKGTLSRLIAKRYGFHHLDTGLTYRAAAKALIDAGLPLDDEAVAEKTARQVDLSGLDRAVLSAHAIGEAASKIAVMPAVRRALVEAQRAFALKEPGTVLDGRDIGTVVCPDAAVKLYVTASPEVRAKRRYDEIVTGGGTADYTTIFEDVKKRDTRDMGRADSPLRPAEDAHLLDTSEMSIEAAFQAAKTLIDVALNKTI</sequence>
<evidence type="ECO:0000255" key="1">
    <source>
        <dbReference type="HAMAP-Rule" id="MF_00238"/>
    </source>
</evidence>